<feature type="chain" id="PRO_0000245792" description="Aryl hydrocarbon receptor nuclear translocator">
    <location>
        <begin position="1"/>
        <end position="723"/>
    </location>
</feature>
<feature type="domain" description="bHLH" evidence="5">
    <location>
        <begin position="65"/>
        <end position="118"/>
    </location>
</feature>
<feature type="domain" description="PAS 1" evidence="4">
    <location>
        <begin position="137"/>
        <end position="208"/>
    </location>
</feature>
<feature type="domain" description="PAS 2" evidence="4">
    <location>
        <begin position="325"/>
        <end position="395"/>
    </location>
</feature>
<feature type="domain" description="PAC" evidence="3">
    <location>
        <begin position="400"/>
        <end position="443"/>
    </location>
</feature>
<feature type="region of interest" description="Disordered" evidence="6">
    <location>
        <begin position="1"/>
        <end position="23"/>
    </location>
</feature>
<feature type="region of interest" description="Disordered" evidence="6">
    <location>
        <begin position="487"/>
        <end position="509"/>
    </location>
</feature>
<feature type="region of interest" description="Disordered" evidence="6">
    <location>
        <begin position="557"/>
        <end position="592"/>
    </location>
</feature>
<feature type="region of interest" description="Disordered" evidence="6">
    <location>
        <begin position="670"/>
        <end position="694"/>
    </location>
</feature>
<feature type="compositionally biased region" description="Polar residues" evidence="6">
    <location>
        <begin position="557"/>
        <end position="570"/>
    </location>
</feature>
<feature type="compositionally biased region" description="Low complexity" evidence="6">
    <location>
        <begin position="670"/>
        <end position="680"/>
    </location>
</feature>
<feature type="splice variant" id="VSP_052086" description="In isoform 2." evidence="10">
    <original>RSVGMAPQMVQPSHSAGQVLAQMSRQNGAPPSNSSPLQGGAAVSWPGPAAGARPPFNNQQVVPQAGKALSPQFAMGSFVGGSSSSFGAMPTTAAPTPTMGANYPNINPRATLNTNGYDGLGSGQQFPSRAVEAVWPQWQGQQQAQNRAEQHPHTQNNQPDIFPDVLAMLDQPANFNNDDFEIPIYPSFNE</original>
    <variation>SSPPGQWRQCGPSGRASSKLRTGQSSTPTHRTTSLTSSLMFSPCWTSQPTSTTMTLRFPSTPLSTSDLTYTLPLTSSVSQMSPSLSFGALCSLSLPVVIQREHV</variation>
    <location>
        <begin position="534"/>
        <end position="723"/>
    </location>
</feature>
<feature type="sequence conflict" description="In Ref. 1; AAC60051." evidence="11" ref="1">
    <location>
        <position position="521"/>
    </location>
</feature>
<organism>
    <name type="scientific">Oncorhynchus mykiss</name>
    <name type="common">Rainbow trout</name>
    <name type="synonym">Salmo gairdneri</name>
    <dbReference type="NCBI Taxonomy" id="8022"/>
    <lineage>
        <taxon>Eukaryota</taxon>
        <taxon>Metazoa</taxon>
        <taxon>Chordata</taxon>
        <taxon>Craniata</taxon>
        <taxon>Vertebrata</taxon>
        <taxon>Euteleostomi</taxon>
        <taxon>Actinopterygii</taxon>
        <taxon>Neopterygii</taxon>
        <taxon>Teleostei</taxon>
        <taxon>Protacanthopterygii</taxon>
        <taxon>Salmoniformes</taxon>
        <taxon>Salmonidae</taxon>
        <taxon>Salmoninae</taxon>
        <taxon>Oncorhynchus</taxon>
    </lineage>
</organism>
<accession>P79832</accession>
<accession>P79831</accession>
<protein>
    <recommendedName>
        <fullName>Aryl hydrocarbon receptor nuclear translocator</fullName>
        <shortName>rtARNT</shortName>
    </recommendedName>
</protein>
<name>ARNT_ONCMY</name>
<gene>
    <name type="primary">arnt</name>
</gene>
<proteinExistence type="evidence at protein level"/>
<keyword id="KW-0010">Activator</keyword>
<keyword id="KW-0025">Alternative splicing</keyword>
<keyword id="KW-0238">DNA-binding</keyword>
<keyword id="KW-0539">Nucleus</keyword>
<keyword id="KW-0677">Repeat</keyword>
<keyword id="KW-0678">Repressor</keyword>
<keyword id="KW-0804">Transcription</keyword>
<keyword id="KW-0805">Transcription regulation</keyword>
<reference evidence="11 12" key="1">
    <citation type="journal article" date="1996" name="J. Biol. Chem.">
        <title>Isolation and expression of cDNAs from rainbow trout (Oncorhynchus mykiss) that encode two novel basic helix-loop-helix/PER-ARNT-SIM (bHLH/PAS) proteins with distinct functions in the presence of the aryl hydrocarbon receptor. Evidence for alternative mRNA splicing and dominant negative activity in the bHLH/PAS family.</title>
        <authorList>
            <person name="Pollenz R.S."/>
            <person name="Sullivan H.R."/>
            <person name="Holmes J."/>
            <person name="Necela B."/>
            <person name="Peterson R.E."/>
        </authorList>
    </citation>
    <scope>NUCLEOTIDE SEQUENCE [MRNA] (ISOFORMS 1 AND 2)</scope>
    <scope>FUNCTION</scope>
    <scope>INTERACTION WITH AHR</scope>
    <scope>SUBCELLULAR LOCATION</scope>
    <source>
        <tissue evidence="9">Gonad</tissue>
    </source>
</reference>
<reference evidence="11" key="2">
    <citation type="journal article" date="1999" name="Biochem. Pharmacol.">
        <title>Functional analysis of activation and repression domains of the rainbow trout aryl hydrocarbon receptor nuclear translocator (rtARNT) protein isoforms.</title>
        <authorList>
            <person name="Necela B."/>
            <person name="Pollenz R.S."/>
        </authorList>
    </citation>
    <scope>FUNCTION</scope>
    <scope>DOMAIN</scope>
</reference>
<reference evidence="11" key="3">
    <citation type="journal article" date="2001" name="Mar. Biotechnol.">
        <title>Expression of aryl hydrocarbon receptor nuclear translocator (ARNT) isoforms in juvenile and adult rainbow trout tissues.</title>
        <authorList>
            <person name="Sojka K.M."/>
            <person name="Pollenz R.S."/>
        </authorList>
    </citation>
    <scope>SUBCELLULAR LOCATION</scope>
    <scope>TISSUE SPECIFICITY</scope>
    <scope>DEVELOPMENTAL STAGE</scope>
</reference>
<sequence>MDSSIPDIPDDSLGLGAGGAQASSSACCAKRVNKRRAAPDFDDDDDGSKLFRCDDDGGGGDKERFARENHSEIERRRRNKMTAYITELSDMVPTCSALARKPDKLTILRMAVSHMKSLRGSGNTAADGTYKPSFLTDQELKHLILEAADGFLFVVSCESGRVVYVSDSLTPVLNQSQSDWLGSSLYDQLHPDDGDKLREQLSTAESNNTGRMLDLKTGTVKKEGQQSSVRMCMGARRSFICRMRCGSCPVEPMSMNRLNFLRSRNRNGLGPPKDGEPQYVVVHCTGYIKSWPPTGVNLTDEEADNILGSRYCLVAIGRLQVTSCPSDTDMNSISVPVEFISRHNCQGLFTFVDHRCMATVGYQPQELLGKNILELAHPEDQELLRDSFQQVVKLKGQVLSVMFRFLSKTRDWLWIRTSSFTFQNPFSEEIEYIICTNANVKQLQQQQAELGGGGRDGLYEAGQVTLPQMPVQAVTAAGTDHSKTMDKAEMHPSMYPNPDQAKFLPSTSAPGVPIYPQDNNNYTTANRSNDTYSRSVGMAPQMVQPSHSAGQVLAQMSRQNGAPPSNSSPLQGGAAVSWPGPAAGARPPFNNQQVVPQAGKALSPQFAMGSFVGGSSSSFGAMPTTAAPTPTMGANYPNINPRATLNTNGYDGLGSGQQFPSRAVEAVWPQWQGQQQAQNRAEQHPHTQNNQPDIFPDVLAMLDQPANFNNDDFEIPIYPSFNE</sequence>
<comment type="function">
    <molecule>Isoform 1</molecule>
    <text evidence="1 2 7 9">Required for activity of the AHR. Upon ligand binding, AHR translocates into the nucleus, where it heterodimerizes with ARNT and induces transcription by binding to xenobiotic response elements (XRE) (PubMed:11230806, PubMed:8940073). Not required for the ligand-binding subunit to translocate from the cytosol to the nucleus after ligand binding. The complex initiates transcription of genes involved in the regulation of a variety of biological processes, including angiogenesis, hematopoiesis, drug and lipid metabolism, cell motility and immune modulation (By similarity). The heterodimer binds to core DNA sequence 5'-TACGTG-3' within the hypoxia response element (HRE) of target gene promoters and functions as a transcriptional regulator of the adaptive response to hypoxia (By similarity). The heterodimer ARNT:AHR binds to core DNA sequence 5'-TGCGTG-3' within the dioxin response element (DRE) of target gene promoters and activates their transcription (By similarity).</text>
</comment>
<comment type="function">
    <molecule>Isoform 2</molecule>
    <text evidence="7 9">Has reduced affinity for the XRE and functions negatively in AHR-mediated signaling by disrupting the binding of dimers formed by isoform 1 and AHR to the XRE.</text>
</comment>
<comment type="subunit">
    <text>Efficient DNA-binding requires dimerization with another bHLH protein. Heterodimer with the aryl hydrocarbon receptor (AHR).</text>
</comment>
<comment type="interaction">
    <interactant intactId="EBI-958635">
        <id>P79832</id>
    </interactant>
    <interactant intactId="EBI-78863">
        <id>P30561</id>
        <label>Ahr</label>
    </interactant>
    <organismsDiffer>true</organismsDiffer>
    <experiments>2</experiments>
</comment>
<comment type="subcellular location">
    <subcellularLocation>
        <location evidence="5 8 9">Nucleus</location>
    </subcellularLocation>
</comment>
<comment type="alternative products">
    <event type="alternative splicing"/>
    <isoform>
        <id>P79832-1</id>
        <name evidence="9">1</name>
        <name evidence="9">rtARNTb</name>
        <sequence type="displayed"/>
    </isoform>
    <isoform>
        <id>P79832-2</id>
        <name evidence="9">2</name>
        <name evidence="9">rtARNTa</name>
        <sequence type="described" ref="VSP_052086"/>
    </isoform>
</comment>
<comment type="tissue specificity">
    <text evidence="8">In day 23 embryos, expressed at highest levels in brain, spinal cord and epithelial cells of developing gill. Expressed at higher levels throughout all tissues in day 27 and 35 sac fry, predominantly in brain and spinal cord. In the adult, isoform 1 is widely expressed (at protein level) and is detected in liver, gill, gonad, brain, kidney, heart, spleen and muscle. Isoform 2 is expressed (at protein level) only in gills with highest expression in the epithelial cells surrounding the gill lamellae.</text>
</comment>
<comment type="developmental stage">
    <text evidence="8">Isoform 1 is expressed both in juvenile and adult with highest levels in day 42 sac fry. Isoform 2 is only expressed in adult (at protein level).</text>
</comment>
<comment type="domain">
    <text evidence="7">The C-terminal region of isoform 1 contains a transactivation domain. The Pro/Ser/Thr-rich region in the C-terminus of isoform 2 inhibits DNA-binding of ARNT-AHR dimers.</text>
</comment>
<comment type="miscellaneous">
    <molecule>Isoform 2</molecule>
    <text evidence="8">Expressed at much lower levels than isoform 1.</text>
</comment>
<dbReference type="EMBL" id="U73840">
    <property type="protein sequence ID" value="AAC60051.1"/>
    <property type="molecule type" value="mRNA"/>
</dbReference>
<dbReference type="EMBL" id="U73841">
    <property type="protein sequence ID" value="AAC60052.1"/>
    <property type="molecule type" value="mRNA"/>
</dbReference>
<dbReference type="RefSeq" id="NP_001118182.1">
    <molecule id="P79832-1"/>
    <property type="nucleotide sequence ID" value="NM_001124710.1"/>
</dbReference>
<dbReference type="SMR" id="P79832"/>
<dbReference type="IntAct" id="P79832">
    <property type="interactions" value="1"/>
</dbReference>
<dbReference type="GeneID" id="100136759"/>
<dbReference type="KEGG" id="omy:100136759"/>
<dbReference type="CTD" id="405"/>
<dbReference type="OrthoDB" id="71302at2759"/>
<dbReference type="Proteomes" id="UP000694395">
    <property type="component" value="Unplaced"/>
</dbReference>
<dbReference type="GO" id="GO:0005737">
    <property type="term" value="C:cytoplasm"/>
    <property type="evidence" value="ECO:0007669"/>
    <property type="project" value="InterPro"/>
</dbReference>
<dbReference type="GO" id="GO:0034753">
    <property type="term" value="C:nuclear aryl hydrocarbon receptor complex"/>
    <property type="evidence" value="ECO:0000250"/>
    <property type="project" value="UniProtKB"/>
</dbReference>
<dbReference type="GO" id="GO:0005634">
    <property type="term" value="C:nucleus"/>
    <property type="evidence" value="ECO:0000314"/>
    <property type="project" value="UniProtKB"/>
</dbReference>
<dbReference type="GO" id="GO:0005667">
    <property type="term" value="C:transcription regulator complex"/>
    <property type="evidence" value="ECO:0007669"/>
    <property type="project" value="InterPro"/>
</dbReference>
<dbReference type="GO" id="GO:0017162">
    <property type="term" value="F:aryl hydrocarbon receptor binding"/>
    <property type="evidence" value="ECO:0000314"/>
    <property type="project" value="UniProtKB"/>
</dbReference>
<dbReference type="GO" id="GO:0003700">
    <property type="term" value="F:DNA-binding transcription factor activity"/>
    <property type="evidence" value="ECO:0007669"/>
    <property type="project" value="InterPro"/>
</dbReference>
<dbReference type="GO" id="GO:0046982">
    <property type="term" value="F:protein heterodimerization activity"/>
    <property type="evidence" value="ECO:0000353"/>
    <property type="project" value="UniProtKB"/>
</dbReference>
<dbReference type="GO" id="GO:1990837">
    <property type="term" value="F:sequence-specific double-stranded DNA binding"/>
    <property type="evidence" value="ECO:0000250"/>
    <property type="project" value="UniProtKB"/>
</dbReference>
<dbReference type="GO" id="GO:0003714">
    <property type="term" value="F:transcription corepressor activity"/>
    <property type="evidence" value="ECO:0000314"/>
    <property type="project" value="UniProtKB"/>
</dbReference>
<dbReference type="GO" id="GO:0030522">
    <property type="term" value="P:intracellular receptor signaling pathway"/>
    <property type="evidence" value="ECO:0007669"/>
    <property type="project" value="GOC"/>
</dbReference>
<dbReference type="GO" id="GO:0045892">
    <property type="term" value="P:negative regulation of DNA-templated transcription"/>
    <property type="evidence" value="ECO:0000314"/>
    <property type="project" value="UniProtKB"/>
</dbReference>
<dbReference type="GO" id="GO:0009968">
    <property type="term" value="P:negative regulation of signal transduction"/>
    <property type="evidence" value="ECO:0000314"/>
    <property type="project" value="UniProtKB"/>
</dbReference>
<dbReference type="GO" id="GO:0045893">
    <property type="term" value="P:positive regulation of DNA-templated transcription"/>
    <property type="evidence" value="ECO:0000314"/>
    <property type="project" value="UniProtKB"/>
</dbReference>
<dbReference type="GO" id="GO:0009967">
    <property type="term" value="P:positive regulation of signal transduction"/>
    <property type="evidence" value="ECO:0000314"/>
    <property type="project" value="UniProtKB"/>
</dbReference>
<dbReference type="GO" id="GO:0045944">
    <property type="term" value="P:positive regulation of transcription by RNA polymerase II"/>
    <property type="evidence" value="ECO:0000250"/>
    <property type="project" value="UniProtKB"/>
</dbReference>
<dbReference type="GO" id="GO:0006355">
    <property type="term" value="P:regulation of DNA-templated transcription"/>
    <property type="evidence" value="ECO:0000314"/>
    <property type="project" value="UniProtKB"/>
</dbReference>
<dbReference type="CDD" id="cd18947">
    <property type="entry name" value="bHLH-PAS_ARNT"/>
    <property type="match status" value="1"/>
</dbReference>
<dbReference type="CDD" id="cd00130">
    <property type="entry name" value="PAS"/>
    <property type="match status" value="2"/>
</dbReference>
<dbReference type="FunFam" id="3.30.450.20:FF:000028">
    <property type="entry name" value="Aryl hydrocarbon receptor nuclear translocator 1"/>
    <property type="match status" value="1"/>
</dbReference>
<dbReference type="FunFam" id="3.30.450.20:FF:000003">
    <property type="entry name" value="Aryl hydrocarbon receptor nuclear translocator 2"/>
    <property type="match status" value="1"/>
</dbReference>
<dbReference type="FunFam" id="4.10.280.10:FF:000011">
    <property type="entry name" value="Aryl hydrocarbon receptor nuclear translocator 2"/>
    <property type="match status" value="1"/>
</dbReference>
<dbReference type="Gene3D" id="4.10.280.10">
    <property type="entry name" value="Helix-loop-helix DNA-binding domain"/>
    <property type="match status" value="1"/>
</dbReference>
<dbReference type="Gene3D" id="3.30.450.20">
    <property type="entry name" value="PAS domain"/>
    <property type="match status" value="2"/>
</dbReference>
<dbReference type="InterPro" id="IPR011598">
    <property type="entry name" value="bHLH_dom"/>
</dbReference>
<dbReference type="InterPro" id="IPR050933">
    <property type="entry name" value="Circadian_TF"/>
</dbReference>
<dbReference type="InterPro" id="IPR036638">
    <property type="entry name" value="HLH_DNA-bd_sf"/>
</dbReference>
<dbReference type="InterPro" id="IPR001067">
    <property type="entry name" value="Nuc_translocat"/>
</dbReference>
<dbReference type="InterPro" id="IPR001610">
    <property type="entry name" value="PAC"/>
</dbReference>
<dbReference type="InterPro" id="IPR000014">
    <property type="entry name" value="PAS"/>
</dbReference>
<dbReference type="InterPro" id="IPR035965">
    <property type="entry name" value="PAS-like_dom_sf"/>
</dbReference>
<dbReference type="InterPro" id="IPR013767">
    <property type="entry name" value="PAS_fold"/>
</dbReference>
<dbReference type="NCBIfam" id="TIGR00229">
    <property type="entry name" value="sensory_box"/>
    <property type="match status" value="1"/>
</dbReference>
<dbReference type="PANTHER" id="PTHR23042">
    <property type="entry name" value="CIRCADIAN PROTEIN CLOCK/ARNT/BMAL/PAS"/>
    <property type="match status" value="1"/>
</dbReference>
<dbReference type="Pfam" id="PF00010">
    <property type="entry name" value="HLH"/>
    <property type="match status" value="1"/>
</dbReference>
<dbReference type="Pfam" id="PF00989">
    <property type="entry name" value="PAS"/>
    <property type="match status" value="1"/>
</dbReference>
<dbReference type="Pfam" id="PF14598">
    <property type="entry name" value="PAS_11"/>
    <property type="match status" value="1"/>
</dbReference>
<dbReference type="PRINTS" id="PR00785">
    <property type="entry name" value="NCTRNSLOCATR"/>
</dbReference>
<dbReference type="SMART" id="SM00353">
    <property type="entry name" value="HLH"/>
    <property type="match status" value="1"/>
</dbReference>
<dbReference type="SMART" id="SM00086">
    <property type="entry name" value="PAC"/>
    <property type="match status" value="1"/>
</dbReference>
<dbReference type="SMART" id="SM00091">
    <property type="entry name" value="PAS"/>
    <property type="match status" value="2"/>
</dbReference>
<dbReference type="SUPFAM" id="SSF47459">
    <property type="entry name" value="HLH, helix-loop-helix DNA-binding domain"/>
    <property type="match status" value="1"/>
</dbReference>
<dbReference type="SUPFAM" id="SSF55785">
    <property type="entry name" value="PYP-like sensor domain (PAS domain)"/>
    <property type="match status" value="2"/>
</dbReference>
<dbReference type="PROSITE" id="PS50888">
    <property type="entry name" value="BHLH"/>
    <property type="match status" value="1"/>
</dbReference>
<dbReference type="PROSITE" id="PS50112">
    <property type="entry name" value="PAS"/>
    <property type="match status" value="2"/>
</dbReference>
<evidence type="ECO:0000250" key="1">
    <source>
        <dbReference type="UniProtKB" id="P27540"/>
    </source>
</evidence>
<evidence type="ECO:0000250" key="2">
    <source>
        <dbReference type="UniProtKB" id="P53762"/>
    </source>
</evidence>
<evidence type="ECO:0000255" key="3"/>
<evidence type="ECO:0000255" key="4">
    <source>
        <dbReference type="PROSITE-ProRule" id="PRU00140"/>
    </source>
</evidence>
<evidence type="ECO:0000255" key="5">
    <source>
        <dbReference type="PROSITE-ProRule" id="PRU00981"/>
    </source>
</evidence>
<evidence type="ECO:0000256" key="6">
    <source>
        <dbReference type="SAM" id="MobiDB-lite"/>
    </source>
</evidence>
<evidence type="ECO:0000269" key="7">
    <source>
    </source>
</evidence>
<evidence type="ECO:0000269" key="8">
    <source>
    </source>
</evidence>
<evidence type="ECO:0000269" key="9">
    <source>
    </source>
</evidence>
<evidence type="ECO:0000303" key="10">
    <source>
    </source>
</evidence>
<evidence type="ECO:0000305" key="11"/>
<evidence type="ECO:0000312" key="12">
    <source>
        <dbReference type="EMBL" id="AAC60052.1"/>
    </source>
</evidence>